<name>VATB2_GOSHI</name>
<accession>Q43433</accession>
<proteinExistence type="evidence at transcript level"/>
<protein>
    <recommendedName>
        <fullName>V-type proton ATPase subunit B 2</fullName>
        <shortName>V-ATPase subunit B 2</shortName>
    </recommendedName>
    <alternativeName>
        <fullName>Vacuolar proton pump subunit B 2</fullName>
    </alternativeName>
</protein>
<sequence>GRIFNGSGKPIDNGPPILPEAYLDISGSSINPSERTYPEEMIQTGISTIDVMNSIARGQKIPFFSAAGLPHNEIAAQICRQAGLVKRLEKAGDLLEDGEEDNFAIVFAAMGVNMETAQFFKRDFEENGSMERVTLFLNLANDPTIERIITPRIALTTAEYLAYECGKHVLVILTDMSSYADALREVSAAREEVPGRRGYPGYMYTDLATIYERAGRIEGRKGSITQIPILTMPNDDITHPTPDLTGYITEGQIYIDRQLHNRQIYPPINVLPSLSRLMKSAIGEGMTRRDHADVSNQLYANYAIGKDVQAMKAVVGEEALSSEDLLYLEFLDKFERKFVTQGAYDTRNIFQSLDLAWTLLRIFPRELLHRIPAKTLDQYYSRDAAN</sequence>
<reference key="1">
    <citation type="journal article" date="1994" name="Plant Physiol.">
        <title>Isolation of multiple cDNAs encoding the vacuolar H(+)-ATPase subunit B from developing cotton (Gossypium hirsutum L.) ovules.</title>
        <authorList>
            <person name="Wan C.Y."/>
            <person name="Wilkins T.A."/>
        </authorList>
    </citation>
    <scope>NUCLEOTIDE SEQUENCE [MRNA]</scope>
    <source>
        <strain>cv. Acala SJ2</strain>
        <tissue>Ovule</tissue>
    </source>
</reference>
<comment type="function">
    <text>Non-catalytic subunit of the peripheral V1 complex of vacuolar ATPase. V-ATPase is responsible for acidifying a variety of intracellular compartments in eukaryotic cells.</text>
</comment>
<comment type="subunit">
    <text>V-ATPase is a heteromultimeric enzyme composed of a peripheral catalytic V1 complex (main components: subunits A, B, C, D, E, and F) attached to an integral membrane V0 proton pore complex (main component: the proteolipid protein).</text>
</comment>
<comment type="similarity">
    <text evidence="1">Belongs to the ATPase alpha/beta chains family.</text>
</comment>
<evidence type="ECO:0000305" key="1"/>
<dbReference type="EMBL" id="U07053">
    <property type="protein sequence ID" value="AAA57550.1"/>
    <property type="molecule type" value="mRNA"/>
</dbReference>
<dbReference type="SMR" id="Q43433"/>
<dbReference type="STRING" id="3635.Q43433"/>
<dbReference type="PaxDb" id="3635-Q43433"/>
<dbReference type="Proteomes" id="UP000189702">
    <property type="component" value="Unplaced"/>
</dbReference>
<dbReference type="GO" id="GO:0033180">
    <property type="term" value="C:proton-transporting V-type ATPase, V1 domain"/>
    <property type="evidence" value="ECO:0007669"/>
    <property type="project" value="InterPro"/>
</dbReference>
<dbReference type="GO" id="GO:0005524">
    <property type="term" value="F:ATP binding"/>
    <property type="evidence" value="ECO:0007669"/>
    <property type="project" value="InterPro"/>
</dbReference>
<dbReference type="GO" id="GO:0046961">
    <property type="term" value="F:proton-transporting ATPase activity, rotational mechanism"/>
    <property type="evidence" value="ECO:0000318"/>
    <property type="project" value="GO_Central"/>
</dbReference>
<dbReference type="GO" id="GO:0007035">
    <property type="term" value="P:vacuolar acidification"/>
    <property type="evidence" value="ECO:0000318"/>
    <property type="project" value="GO_Central"/>
</dbReference>
<dbReference type="CDD" id="cd18112">
    <property type="entry name" value="ATP-synt_V_A-type_beta_C"/>
    <property type="match status" value="1"/>
</dbReference>
<dbReference type="CDD" id="cd01135">
    <property type="entry name" value="V_A-ATPase_B"/>
    <property type="match status" value="1"/>
</dbReference>
<dbReference type="Gene3D" id="3.40.50.12240">
    <property type="match status" value="1"/>
</dbReference>
<dbReference type="InterPro" id="IPR055190">
    <property type="entry name" value="ATP-synt_VA_C"/>
</dbReference>
<dbReference type="InterPro" id="IPR020003">
    <property type="entry name" value="ATPase_a/bsu_AS"/>
</dbReference>
<dbReference type="InterPro" id="IPR000194">
    <property type="entry name" value="ATPase_F1/V1/A1_a/bsu_nucl-bd"/>
</dbReference>
<dbReference type="InterPro" id="IPR005723">
    <property type="entry name" value="ATPase_V1-cplx_bsu"/>
</dbReference>
<dbReference type="InterPro" id="IPR027417">
    <property type="entry name" value="P-loop_NTPase"/>
</dbReference>
<dbReference type="InterPro" id="IPR022879">
    <property type="entry name" value="V-ATPase_su_B/beta"/>
</dbReference>
<dbReference type="NCBIfam" id="NF003235">
    <property type="entry name" value="PRK04196.1"/>
    <property type="match status" value="1"/>
</dbReference>
<dbReference type="NCBIfam" id="TIGR01040">
    <property type="entry name" value="V-ATPase_V1_B"/>
    <property type="match status" value="1"/>
</dbReference>
<dbReference type="PANTHER" id="PTHR43389">
    <property type="entry name" value="V-TYPE PROTON ATPASE SUBUNIT B"/>
    <property type="match status" value="1"/>
</dbReference>
<dbReference type="PANTHER" id="PTHR43389:SF27">
    <property type="entry name" value="V-TYPE PROTON ATPASE SUBUNIT B1-RELATED"/>
    <property type="match status" value="1"/>
</dbReference>
<dbReference type="Pfam" id="PF00006">
    <property type="entry name" value="ATP-synt_ab"/>
    <property type="match status" value="1"/>
</dbReference>
<dbReference type="Pfam" id="PF22919">
    <property type="entry name" value="ATP-synt_VA_C"/>
    <property type="match status" value="1"/>
</dbReference>
<dbReference type="SUPFAM" id="SSF52540">
    <property type="entry name" value="P-loop containing nucleoside triphosphate hydrolases"/>
    <property type="match status" value="1"/>
</dbReference>
<dbReference type="PROSITE" id="PS00152">
    <property type="entry name" value="ATPASE_ALPHA_BETA"/>
    <property type="match status" value="1"/>
</dbReference>
<keyword id="KW-0375">Hydrogen ion transport</keyword>
<keyword id="KW-0406">Ion transport</keyword>
<keyword id="KW-1185">Reference proteome</keyword>
<keyword id="KW-0813">Transport</keyword>
<feature type="chain" id="PRO_0000144642" description="V-type proton ATPase subunit B 2">
    <location>
        <begin position="1" status="less than"/>
        <end position="386"/>
    </location>
</feature>
<feature type="non-terminal residue">
    <location>
        <position position="1"/>
    </location>
</feature>
<organism>
    <name type="scientific">Gossypium hirsutum</name>
    <name type="common">Upland cotton</name>
    <name type="synonym">Gossypium mexicanum</name>
    <dbReference type="NCBI Taxonomy" id="3635"/>
    <lineage>
        <taxon>Eukaryota</taxon>
        <taxon>Viridiplantae</taxon>
        <taxon>Streptophyta</taxon>
        <taxon>Embryophyta</taxon>
        <taxon>Tracheophyta</taxon>
        <taxon>Spermatophyta</taxon>
        <taxon>Magnoliopsida</taxon>
        <taxon>eudicotyledons</taxon>
        <taxon>Gunneridae</taxon>
        <taxon>Pentapetalae</taxon>
        <taxon>rosids</taxon>
        <taxon>malvids</taxon>
        <taxon>Malvales</taxon>
        <taxon>Malvaceae</taxon>
        <taxon>Malvoideae</taxon>
        <taxon>Gossypium</taxon>
    </lineage>
</organism>